<evidence type="ECO:0000255" key="1">
    <source>
        <dbReference type="HAMAP-Rule" id="MF_01306"/>
    </source>
</evidence>
<evidence type="ECO:0000256" key="2">
    <source>
        <dbReference type="SAM" id="MobiDB-lite"/>
    </source>
</evidence>
<evidence type="ECO:0000305" key="3"/>
<comment type="function">
    <text evidence="1">One of the primary rRNA binding proteins, it binds directly to 16S rRNA where it nucleates assembly of the body of the 30S subunit.</text>
</comment>
<comment type="function">
    <text evidence="1">With S5 and S12 plays an important role in translational accuracy.</text>
</comment>
<comment type="subunit">
    <text evidence="1">Part of the 30S ribosomal subunit. Contacts protein S5. The interaction surface between S4 and S5 is involved in control of translational fidelity.</text>
</comment>
<comment type="similarity">
    <text evidence="1">Belongs to the universal ribosomal protein uS4 family.</text>
</comment>
<accession>Q3AWW5</accession>
<sequence length="202" mass="22879">MSRYRGPRLRITRRLGDLPGLTRKAAKRSYPPGQHGQARRKRSEYAIRLEEKQKLRFNYGVSERQLVRYVKKARAQEGSTGTNLLKLLESRLDNICFRLGFGPTVPGSRQLVNHGHVTVNGRVTDIASYQVKPGDVLAIREKKGSKQLAEGNLAFPGLSNIPPHLELDKAKLSAKCTGRCEREWVALEINELLVVEYYSRKV</sequence>
<proteinExistence type="inferred from homology"/>
<reference key="1">
    <citation type="submission" date="2005-08" db="EMBL/GenBank/DDBJ databases">
        <title>Complete sequence of Synechococcus sp. CC9902.</title>
        <authorList>
            <person name="Copeland A."/>
            <person name="Lucas S."/>
            <person name="Lapidus A."/>
            <person name="Barry K."/>
            <person name="Detter J.C."/>
            <person name="Glavina T."/>
            <person name="Hammon N."/>
            <person name="Israni S."/>
            <person name="Pitluck S."/>
            <person name="Martinez M."/>
            <person name="Schmutz J."/>
            <person name="Larimer F."/>
            <person name="Land M."/>
            <person name="Kyrpides N."/>
            <person name="Ivanova N."/>
            <person name="Richardson P."/>
        </authorList>
    </citation>
    <scope>NUCLEOTIDE SEQUENCE [LARGE SCALE GENOMIC DNA]</scope>
    <source>
        <strain>CC9902</strain>
    </source>
</reference>
<organism>
    <name type="scientific">Synechococcus sp. (strain CC9902)</name>
    <dbReference type="NCBI Taxonomy" id="316279"/>
    <lineage>
        <taxon>Bacteria</taxon>
        <taxon>Bacillati</taxon>
        <taxon>Cyanobacteriota</taxon>
        <taxon>Cyanophyceae</taxon>
        <taxon>Synechococcales</taxon>
        <taxon>Synechococcaceae</taxon>
        <taxon>Synechococcus</taxon>
    </lineage>
</organism>
<feature type="chain" id="PRO_0000293386" description="Small ribosomal subunit protein uS4">
    <location>
        <begin position="1"/>
        <end position="202"/>
    </location>
</feature>
<feature type="domain" description="S4 RNA-binding" evidence="1">
    <location>
        <begin position="90"/>
        <end position="152"/>
    </location>
</feature>
<feature type="region of interest" description="Disordered" evidence="2">
    <location>
        <begin position="15"/>
        <end position="42"/>
    </location>
</feature>
<keyword id="KW-1185">Reference proteome</keyword>
<keyword id="KW-0687">Ribonucleoprotein</keyword>
<keyword id="KW-0689">Ribosomal protein</keyword>
<keyword id="KW-0694">RNA-binding</keyword>
<keyword id="KW-0699">rRNA-binding</keyword>
<protein>
    <recommendedName>
        <fullName evidence="1">Small ribosomal subunit protein uS4</fullName>
    </recommendedName>
    <alternativeName>
        <fullName evidence="3">30S ribosomal protein S4</fullName>
    </alternativeName>
</protein>
<name>RS4_SYNS9</name>
<gene>
    <name evidence="1" type="primary">rpsD</name>
    <name evidence="1" type="synonym">rps4</name>
    <name type="ordered locus">Syncc9902_1590</name>
</gene>
<dbReference type="EMBL" id="CP000097">
    <property type="protein sequence ID" value="ABB26548.1"/>
    <property type="molecule type" value="Genomic_DNA"/>
</dbReference>
<dbReference type="RefSeq" id="WP_009789340.1">
    <property type="nucleotide sequence ID" value="NC_007513.1"/>
</dbReference>
<dbReference type="SMR" id="Q3AWW5"/>
<dbReference type="STRING" id="316279.Syncc9902_1590"/>
<dbReference type="KEGG" id="sye:Syncc9902_1590"/>
<dbReference type="eggNOG" id="COG0522">
    <property type="taxonomic scope" value="Bacteria"/>
</dbReference>
<dbReference type="HOGENOM" id="CLU_092403_0_5_3"/>
<dbReference type="OrthoDB" id="9803672at2"/>
<dbReference type="Proteomes" id="UP000002712">
    <property type="component" value="Chromosome"/>
</dbReference>
<dbReference type="GO" id="GO:0015935">
    <property type="term" value="C:small ribosomal subunit"/>
    <property type="evidence" value="ECO:0007669"/>
    <property type="project" value="InterPro"/>
</dbReference>
<dbReference type="GO" id="GO:0019843">
    <property type="term" value="F:rRNA binding"/>
    <property type="evidence" value="ECO:0007669"/>
    <property type="project" value="UniProtKB-UniRule"/>
</dbReference>
<dbReference type="GO" id="GO:0003735">
    <property type="term" value="F:structural constituent of ribosome"/>
    <property type="evidence" value="ECO:0007669"/>
    <property type="project" value="InterPro"/>
</dbReference>
<dbReference type="GO" id="GO:0042274">
    <property type="term" value="P:ribosomal small subunit biogenesis"/>
    <property type="evidence" value="ECO:0007669"/>
    <property type="project" value="TreeGrafter"/>
</dbReference>
<dbReference type="GO" id="GO:0006412">
    <property type="term" value="P:translation"/>
    <property type="evidence" value="ECO:0007669"/>
    <property type="project" value="UniProtKB-UniRule"/>
</dbReference>
<dbReference type="CDD" id="cd00165">
    <property type="entry name" value="S4"/>
    <property type="match status" value="1"/>
</dbReference>
<dbReference type="FunFam" id="3.10.290.10:FF:000001">
    <property type="entry name" value="30S ribosomal protein S4"/>
    <property type="match status" value="1"/>
</dbReference>
<dbReference type="FunFam" id="1.10.1050.10:FF:000002">
    <property type="entry name" value="30S ribosomal protein S4, chloroplastic"/>
    <property type="match status" value="1"/>
</dbReference>
<dbReference type="Gene3D" id="1.10.1050.10">
    <property type="entry name" value="Ribosomal Protein S4 Delta 41, Chain A, domain 1"/>
    <property type="match status" value="1"/>
</dbReference>
<dbReference type="Gene3D" id="3.10.290.10">
    <property type="entry name" value="RNA-binding S4 domain"/>
    <property type="match status" value="1"/>
</dbReference>
<dbReference type="HAMAP" id="MF_01306_B">
    <property type="entry name" value="Ribosomal_uS4_B"/>
    <property type="match status" value="1"/>
</dbReference>
<dbReference type="InterPro" id="IPR022801">
    <property type="entry name" value="Ribosomal_uS4"/>
</dbReference>
<dbReference type="InterPro" id="IPR005709">
    <property type="entry name" value="Ribosomal_uS4_bac-type"/>
</dbReference>
<dbReference type="InterPro" id="IPR018079">
    <property type="entry name" value="Ribosomal_uS4_CS"/>
</dbReference>
<dbReference type="InterPro" id="IPR001912">
    <property type="entry name" value="Ribosomal_uS4_N"/>
</dbReference>
<dbReference type="InterPro" id="IPR002942">
    <property type="entry name" value="S4_RNA-bd"/>
</dbReference>
<dbReference type="InterPro" id="IPR036986">
    <property type="entry name" value="S4_RNA-bd_sf"/>
</dbReference>
<dbReference type="NCBIfam" id="NF003717">
    <property type="entry name" value="PRK05327.1"/>
    <property type="match status" value="1"/>
</dbReference>
<dbReference type="NCBIfam" id="TIGR01017">
    <property type="entry name" value="rpsD_bact"/>
    <property type="match status" value="1"/>
</dbReference>
<dbReference type="PANTHER" id="PTHR11831">
    <property type="entry name" value="30S 40S RIBOSOMAL PROTEIN"/>
    <property type="match status" value="1"/>
</dbReference>
<dbReference type="PANTHER" id="PTHR11831:SF4">
    <property type="entry name" value="SMALL RIBOSOMAL SUBUNIT PROTEIN US4M"/>
    <property type="match status" value="1"/>
</dbReference>
<dbReference type="Pfam" id="PF00163">
    <property type="entry name" value="Ribosomal_S4"/>
    <property type="match status" value="1"/>
</dbReference>
<dbReference type="Pfam" id="PF01479">
    <property type="entry name" value="S4"/>
    <property type="match status" value="1"/>
</dbReference>
<dbReference type="SMART" id="SM01390">
    <property type="entry name" value="Ribosomal_S4"/>
    <property type="match status" value="1"/>
</dbReference>
<dbReference type="SMART" id="SM00363">
    <property type="entry name" value="S4"/>
    <property type="match status" value="1"/>
</dbReference>
<dbReference type="SUPFAM" id="SSF55174">
    <property type="entry name" value="Alpha-L RNA-binding motif"/>
    <property type="match status" value="1"/>
</dbReference>
<dbReference type="PROSITE" id="PS00632">
    <property type="entry name" value="RIBOSOMAL_S4"/>
    <property type="match status" value="1"/>
</dbReference>
<dbReference type="PROSITE" id="PS50889">
    <property type="entry name" value="S4"/>
    <property type="match status" value="1"/>
</dbReference>